<proteinExistence type="inferred from homology"/>
<reference key="1">
    <citation type="submission" date="2008-12" db="EMBL/GenBank/DDBJ databases">
        <title>Complete sequence of chromosome of Shewanella baltica OS223.</title>
        <authorList>
            <consortium name="US DOE Joint Genome Institute"/>
            <person name="Lucas S."/>
            <person name="Copeland A."/>
            <person name="Lapidus A."/>
            <person name="Glavina del Rio T."/>
            <person name="Dalin E."/>
            <person name="Tice H."/>
            <person name="Bruce D."/>
            <person name="Goodwin L."/>
            <person name="Pitluck S."/>
            <person name="Chertkov O."/>
            <person name="Meincke L."/>
            <person name="Brettin T."/>
            <person name="Detter J.C."/>
            <person name="Han C."/>
            <person name="Kuske C.R."/>
            <person name="Larimer F."/>
            <person name="Land M."/>
            <person name="Hauser L."/>
            <person name="Kyrpides N."/>
            <person name="Ovchinnikova G."/>
            <person name="Brettar I."/>
            <person name="Rodrigues J."/>
            <person name="Konstantinidis K."/>
            <person name="Tiedje J."/>
        </authorList>
    </citation>
    <scope>NUCLEOTIDE SEQUENCE [LARGE SCALE GENOMIC DNA]</scope>
    <source>
        <strain>OS223</strain>
    </source>
</reference>
<evidence type="ECO:0000255" key="1">
    <source>
        <dbReference type="HAMAP-Rule" id="MF_01216"/>
    </source>
</evidence>
<accession>B8E4C0</accession>
<feature type="chain" id="PRO_1000164765" description="FMN-dependent NADH:quinone oxidoreductase">
    <location>
        <begin position="1"/>
        <end position="198"/>
    </location>
</feature>
<feature type="binding site" evidence="1">
    <location>
        <position position="10"/>
    </location>
    <ligand>
        <name>FMN</name>
        <dbReference type="ChEBI" id="CHEBI:58210"/>
    </ligand>
</feature>
<feature type="binding site" evidence="1">
    <location>
        <begin position="16"/>
        <end position="18"/>
    </location>
    <ligand>
        <name>FMN</name>
        <dbReference type="ChEBI" id="CHEBI:58210"/>
    </ligand>
</feature>
<feature type="binding site" evidence="1">
    <location>
        <begin position="94"/>
        <end position="97"/>
    </location>
    <ligand>
        <name>FMN</name>
        <dbReference type="ChEBI" id="CHEBI:58210"/>
    </ligand>
</feature>
<feature type="binding site" evidence="1">
    <location>
        <begin position="138"/>
        <end position="141"/>
    </location>
    <ligand>
        <name>FMN</name>
        <dbReference type="ChEBI" id="CHEBI:58210"/>
    </ligand>
</feature>
<gene>
    <name evidence="1" type="primary">azoR</name>
    <name type="ordered locus">Sbal223_0325</name>
</gene>
<keyword id="KW-0285">Flavoprotein</keyword>
<keyword id="KW-0288">FMN</keyword>
<keyword id="KW-0520">NAD</keyword>
<keyword id="KW-0560">Oxidoreductase</keyword>
<name>AZOR_SHEB2</name>
<sequence>MSKVLILKSSILGGYSQSAVLIDHLASHWETQGAAITVRDLGGKDVLPMVDGEIASGLRGGAELSARQQEMLALSDTLVSELKANDTIVIAAPMYNFTIPAQLKNWIDFIARAGVTFTYTETGPKGLVEGKRAVLVTTRGGAHKDGPTDHVVPYLKTVLGFIGITNVEVVYAEALNMGPEAHDKGMSEAKHSIDQLKA</sequence>
<protein>
    <recommendedName>
        <fullName evidence="1">FMN-dependent NADH:quinone oxidoreductase</fullName>
        <ecNumber evidence="1">1.6.5.-</ecNumber>
    </recommendedName>
    <alternativeName>
        <fullName evidence="1">Azo-dye reductase</fullName>
    </alternativeName>
    <alternativeName>
        <fullName evidence="1">FMN-dependent NADH-azo compound oxidoreductase</fullName>
    </alternativeName>
    <alternativeName>
        <fullName evidence="1">FMN-dependent NADH-azoreductase</fullName>
        <ecNumber evidence="1">1.7.1.17</ecNumber>
    </alternativeName>
</protein>
<dbReference type="EC" id="1.6.5.-" evidence="1"/>
<dbReference type="EC" id="1.7.1.17" evidence="1"/>
<dbReference type="EMBL" id="CP001252">
    <property type="protein sequence ID" value="ACK44861.1"/>
    <property type="molecule type" value="Genomic_DNA"/>
</dbReference>
<dbReference type="RefSeq" id="WP_012586538.1">
    <property type="nucleotide sequence ID" value="NC_011663.1"/>
</dbReference>
<dbReference type="SMR" id="B8E4C0"/>
<dbReference type="KEGG" id="sbp:Sbal223_0325"/>
<dbReference type="HOGENOM" id="CLU_088964_0_0_6"/>
<dbReference type="Proteomes" id="UP000002507">
    <property type="component" value="Chromosome"/>
</dbReference>
<dbReference type="GO" id="GO:0009055">
    <property type="term" value="F:electron transfer activity"/>
    <property type="evidence" value="ECO:0007669"/>
    <property type="project" value="UniProtKB-UniRule"/>
</dbReference>
<dbReference type="GO" id="GO:0010181">
    <property type="term" value="F:FMN binding"/>
    <property type="evidence" value="ECO:0007669"/>
    <property type="project" value="UniProtKB-UniRule"/>
</dbReference>
<dbReference type="GO" id="GO:0016652">
    <property type="term" value="F:oxidoreductase activity, acting on NAD(P)H as acceptor"/>
    <property type="evidence" value="ECO:0007669"/>
    <property type="project" value="UniProtKB-UniRule"/>
</dbReference>
<dbReference type="GO" id="GO:0016655">
    <property type="term" value="F:oxidoreductase activity, acting on NAD(P)H, quinone or similar compound as acceptor"/>
    <property type="evidence" value="ECO:0007669"/>
    <property type="project" value="InterPro"/>
</dbReference>
<dbReference type="Gene3D" id="3.40.50.360">
    <property type="match status" value="1"/>
</dbReference>
<dbReference type="HAMAP" id="MF_01216">
    <property type="entry name" value="Azoreductase_type1"/>
    <property type="match status" value="1"/>
</dbReference>
<dbReference type="InterPro" id="IPR003680">
    <property type="entry name" value="Flavodoxin_fold"/>
</dbReference>
<dbReference type="InterPro" id="IPR029039">
    <property type="entry name" value="Flavoprotein-like_sf"/>
</dbReference>
<dbReference type="InterPro" id="IPR050104">
    <property type="entry name" value="FMN-dep_NADH:Q_OxRdtase_AzoR1"/>
</dbReference>
<dbReference type="InterPro" id="IPR023048">
    <property type="entry name" value="NADH:quinone_OxRdtase_FMN_depd"/>
</dbReference>
<dbReference type="PANTHER" id="PTHR43741">
    <property type="entry name" value="FMN-DEPENDENT NADH-AZOREDUCTASE 1"/>
    <property type="match status" value="1"/>
</dbReference>
<dbReference type="PANTHER" id="PTHR43741:SF2">
    <property type="entry name" value="FMN-DEPENDENT NADH:QUINONE OXIDOREDUCTASE"/>
    <property type="match status" value="1"/>
</dbReference>
<dbReference type="Pfam" id="PF02525">
    <property type="entry name" value="Flavodoxin_2"/>
    <property type="match status" value="1"/>
</dbReference>
<dbReference type="SUPFAM" id="SSF52218">
    <property type="entry name" value="Flavoproteins"/>
    <property type="match status" value="1"/>
</dbReference>
<organism>
    <name type="scientific">Shewanella baltica (strain OS223)</name>
    <dbReference type="NCBI Taxonomy" id="407976"/>
    <lineage>
        <taxon>Bacteria</taxon>
        <taxon>Pseudomonadati</taxon>
        <taxon>Pseudomonadota</taxon>
        <taxon>Gammaproteobacteria</taxon>
        <taxon>Alteromonadales</taxon>
        <taxon>Shewanellaceae</taxon>
        <taxon>Shewanella</taxon>
    </lineage>
</organism>
<comment type="function">
    <text evidence="1">Quinone reductase that provides resistance to thiol-specific stress caused by electrophilic quinones.</text>
</comment>
<comment type="function">
    <text evidence="1">Also exhibits azoreductase activity. Catalyzes the reductive cleavage of the azo bond in aromatic azo compounds to the corresponding amines.</text>
</comment>
<comment type="catalytic activity">
    <reaction evidence="1">
        <text>2 a quinone + NADH + H(+) = 2 a 1,4-benzosemiquinone + NAD(+)</text>
        <dbReference type="Rhea" id="RHEA:65952"/>
        <dbReference type="ChEBI" id="CHEBI:15378"/>
        <dbReference type="ChEBI" id="CHEBI:57540"/>
        <dbReference type="ChEBI" id="CHEBI:57945"/>
        <dbReference type="ChEBI" id="CHEBI:132124"/>
        <dbReference type="ChEBI" id="CHEBI:134225"/>
    </reaction>
</comment>
<comment type="catalytic activity">
    <reaction evidence="1">
        <text>N,N-dimethyl-1,4-phenylenediamine + anthranilate + 2 NAD(+) = 2-(4-dimethylaminophenyl)diazenylbenzoate + 2 NADH + 2 H(+)</text>
        <dbReference type="Rhea" id="RHEA:55872"/>
        <dbReference type="ChEBI" id="CHEBI:15378"/>
        <dbReference type="ChEBI" id="CHEBI:15783"/>
        <dbReference type="ChEBI" id="CHEBI:16567"/>
        <dbReference type="ChEBI" id="CHEBI:57540"/>
        <dbReference type="ChEBI" id="CHEBI:57945"/>
        <dbReference type="ChEBI" id="CHEBI:71579"/>
        <dbReference type="EC" id="1.7.1.17"/>
    </reaction>
</comment>
<comment type="cofactor">
    <cofactor evidence="1">
        <name>FMN</name>
        <dbReference type="ChEBI" id="CHEBI:58210"/>
    </cofactor>
    <text evidence="1">Binds 1 FMN per subunit.</text>
</comment>
<comment type="subunit">
    <text evidence="1">Homodimer.</text>
</comment>
<comment type="similarity">
    <text evidence="1">Belongs to the azoreductase type 1 family.</text>
</comment>